<feature type="chain" id="PRO_0000138715" description="Heptaprenylglyceryl phosphate synthase">
    <location>
        <begin position="1"/>
        <end position="225"/>
    </location>
</feature>
<feature type="binding site" evidence="1">
    <location>
        <position position="6"/>
    </location>
    <ligand>
        <name>sn-glycerol 1-phosphate</name>
        <dbReference type="ChEBI" id="CHEBI:57685"/>
    </ligand>
</feature>
<feature type="binding site" evidence="1">
    <location>
        <position position="8"/>
    </location>
    <ligand>
        <name>Mg(2+)</name>
        <dbReference type="ChEBI" id="CHEBI:18420"/>
    </ligand>
</feature>
<feature type="binding site" evidence="1">
    <location>
        <position position="34"/>
    </location>
    <ligand>
        <name>Mg(2+)</name>
        <dbReference type="ChEBI" id="CHEBI:18420"/>
    </ligand>
</feature>
<feature type="binding site" evidence="1">
    <location>
        <begin position="153"/>
        <end position="158"/>
    </location>
    <ligand>
        <name>sn-glycerol 1-phosphate</name>
        <dbReference type="ChEBI" id="CHEBI:57685"/>
    </ligand>
</feature>
<feature type="binding site" evidence="1">
    <location>
        <position position="183"/>
    </location>
    <ligand>
        <name>sn-glycerol 1-phosphate</name>
        <dbReference type="ChEBI" id="CHEBI:57685"/>
    </ligand>
</feature>
<feature type="binding site" evidence="1">
    <location>
        <begin position="203"/>
        <end position="204"/>
    </location>
    <ligand>
        <name>sn-glycerol 1-phosphate</name>
        <dbReference type="ChEBI" id="CHEBI:57685"/>
    </ligand>
</feature>
<comment type="function">
    <text evidence="2 3">Prenyltransferase that catalyzes in vivo the transfer of the heptaprenyl moiety of heptaprenyl pyrophosphate (HepPP; 35 carbon atoms) to the C3 hydroxyl of sn-glycerol-1-phosphate (G1P), producing heptaprenylglyceryl phosphate (HepGP). This reaction is an ether-bond-formation step in the biosynthesis of archaea-type G1P-based membrane lipids found in Bacillales. To a much lesser extent, is also able to use geranylgeranyl diphosphate (GGPP; C20) as the prenyl donor.</text>
</comment>
<comment type="catalytic activity">
    <reaction evidence="1 2 3">
        <text>sn-glycerol 1-phosphate + all-trans-heptaprenyl diphosphate = 3-heptaprenyl-sn-glycero-1-phosphate + diphosphate</text>
        <dbReference type="Rhea" id="RHEA:33495"/>
        <dbReference type="ChEBI" id="CHEBI:33019"/>
        <dbReference type="ChEBI" id="CHEBI:57685"/>
        <dbReference type="ChEBI" id="CHEBI:58206"/>
        <dbReference type="ChEBI" id="CHEBI:64781"/>
        <dbReference type="EC" id="2.5.1.n9"/>
    </reaction>
</comment>
<comment type="cofactor">
    <cofactor evidence="1">
        <name>Mg(2+)</name>
        <dbReference type="ChEBI" id="CHEBI:18420"/>
    </cofactor>
</comment>
<comment type="pathway">
    <text evidence="1">Membrane lipid metabolism; glycerophospholipid metabolism.</text>
</comment>
<comment type="subunit">
    <text evidence="1 2 3">Homodimer.</text>
</comment>
<comment type="similarity">
    <text evidence="1">Belongs to the GGGP/HepGP synthase family. Group I subfamily.</text>
</comment>
<proteinExistence type="evidence at protein level"/>
<gene>
    <name evidence="1" type="primary">pcrB</name>
    <name type="ordered locus">lmo1760</name>
</gene>
<sequence length="225" mass="25360">MKHLFKLDPAKNLPTNDVTKLIHSGTDGFIIGGTDNVQIEAVQNLYELLVETDLPIFLEISNESMILPEADHFLIPVVLNTENSKWTHGLHKELIKEMGEFIPWKRVTSEGYVILNKDAKVAHLTEAKTDLTDEDIVAYARLAENIFHLPIFYVEYSGMYGDPEVVRKASAALSNTKFWYGGGIRSKEQAAEMAKYADTIIVGNIIYEDLEKALETATIFRKKTV</sequence>
<protein>
    <recommendedName>
        <fullName evidence="1">Heptaprenylglyceryl phosphate synthase</fullName>
        <shortName evidence="1">HepGP synthase</shortName>
        <ecNumber evidence="1 2 3">2.5.1.n9</ecNumber>
    </recommendedName>
    <alternativeName>
        <fullName evidence="1">Glycerol-1-phosphate heptaprenyltransferase</fullName>
    </alternativeName>
</protein>
<name>PCRB_LISMO</name>
<organism>
    <name type="scientific">Listeria monocytogenes serovar 1/2a (strain ATCC BAA-679 / EGD-e)</name>
    <dbReference type="NCBI Taxonomy" id="169963"/>
    <lineage>
        <taxon>Bacteria</taxon>
        <taxon>Bacillati</taxon>
        <taxon>Bacillota</taxon>
        <taxon>Bacilli</taxon>
        <taxon>Bacillales</taxon>
        <taxon>Listeriaceae</taxon>
        <taxon>Listeria</taxon>
    </lineage>
</organism>
<keyword id="KW-0444">Lipid biosynthesis</keyword>
<keyword id="KW-0443">Lipid metabolism</keyword>
<keyword id="KW-0460">Magnesium</keyword>
<keyword id="KW-0479">Metal-binding</keyword>
<keyword id="KW-0594">Phospholipid biosynthesis</keyword>
<keyword id="KW-1208">Phospholipid metabolism</keyword>
<keyword id="KW-1185">Reference proteome</keyword>
<keyword id="KW-0808">Transferase</keyword>
<dbReference type="EC" id="2.5.1.n9" evidence="1 2 3"/>
<dbReference type="EMBL" id="AL591981">
    <property type="protein sequence ID" value="CAC99838.1"/>
    <property type="molecule type" value="Genomic_DNA"/>
</dbReference>
<dbReference type="PIR" id="AH1294">
    <property type="entry name" value="AH1294"/>
</dbReference>
<dbReference type="RefSeq" id="NP_465285.1">
    <property type="nucleotide sequence ID" value="NC_003210.1"/>
</dbReference>
<dbReference type="RefSeq" id="WP_009930607.1">
    <property type="nucleotide sequence ID" value="NZ_CP149495.1"/>
</dbReference>
<dbReference type="SMR" id="Q8Y6C8"/>
<dbReference type="STRING" id="169963.gene:17594442"/>
<dbReference type="PaxDb" id="169963-lmo1760"/>
<dbReference type="EnsemblBacteria" id="CAC99838">
    <property type="protein sequence ID" value="CAC99838"/>
    <property type="gene ID" value="CAC99838"/>
</dbReference>
<dbReference type="GeneID" id="985989"/>
<dbReference type="KEGG" id="lmo:lmo1760"/>
<dbReference type="PATRIC" id="fig|169963.11.peg.1804"/>
<dbReference type="eggNOG" id="COG1646">
    <property type="taxonomic scope" value="Bacteria"/>
</dbReference>
<dbReference type="HOGENOM" id="CLU_095211_0_0_9"/>
<dbReference type="OrthoDB" id="2381757at2"/>
<dbReference type="PhylomeDB" id="Q8Y6C8"/>
<dbReference type="BioCyc" id="LMON169963:LMO1760-MONOMER"/>
<dbReference type="UniPathway" id="UPA00940"/>
<dbReference type="Proteomes" id="UP000000817">
    <property type="component" value="Chromosome"/>
</dbReference>
<dbReference type="GO" id="GO:0120536">
    <property type="term" value="F:heptaprenylglyceryl phosphate synthase activity"/>
    <property type="evidence" value="ECO:0000316"/>
    <property type="project" value="UniProtKB"/>
</dbReference>
<dbReference type="GO" id="GO:0000287">
    <property type="term" value="F:magnesium ion binding"/>
    <property type="evidence" value="ECO:0007669"/>
    <property type="project" value="UniProtKB-UniRule"/>
</dbReference>
<dbReference type="GO" id="GO:0004659">
    <property type="term" value="F:prenyltransferase activity"/>
    <property type="evidence" value="ECO:0000314"/>
    <property type="project" value="UniProtKB"/>
</dbReference>
<dbReference type="GO" id="GO:0046474">
    <property type="term" value="P:glycerophospholipid biosynthetic process"/>
    <property type="evidence" value="ECO:0000316"/>
    <property type="project" value="UniProtKB"/>
</dbReference>
<dbReference type="CDD" id="cd02812">
    <property type="entry name" value="PcrB_like"/>
    <property type="match status" value="1"/>
</dbReference>
<dbReference type="FunFam" id="3.20.20.390:FF:000001">
    <property type="entry name" value="Heptaprenylglyceryl phosphate synthase"/>
    <property type="match status" value="1"/>
</dbReference>
<dbReference type="Gene3D" id="3.20.20.390">
    <property type="entry name" value="FMN-linked oxidoreductases"/>
    <property type="match status" value="1"/>
</dbReference>
<dbReference type="HAMAP" id="MF_00112">
    <property type="entry name" value="GGGP_HepGP_synthase"/>
    <property type="match status" value="1"/>
</dbReference>
<dbReference type="InterPro" id="IPR039074">
    <property type="entry name" value="GGGP/HepGP_synthase_I"/>
</dbReference>
<dbReference type="InterPro" id="IPR038597">
    <property type="entry name" value="GGGP/HepGP_synthase_sf"/>
</dbReference>
<dbReference type="InterPro" id="IPR008205">
    <property type="entry name" value="GGGP_HepGP_synthase"/>
</dbReference>
<dbReference type="NCBIfam" id="TIGR01768">
    <property type="entry name" value="GGGP-family"/>
    <property type="match status" value="1"/>
</dbReference>
<dbReference type="NCBIfam" id="NF003199">
    <property type="entry name" value="PRK04169.1-3"/>
    <property type="match status" value="1"/>
</dbReference>
<dbReference type="PANTHER" id="PTHR40029">
    <property type="match status" value="1"/>
</dbReference>
<dbReference type="PANTHER" id="PTHR40029:SF2">
    <property type="entry name" value="HEPTAPRENYLGLYCERYL PHOSPHATE SYNTHASE"/>
    <property type="match status" value="1"/>
</dbReference>
<dbReference type="Pfam" id="PF01884">
    <property type="entry name" value="PcrB"/>
    <property type="match status" value="1"/>
</dbReference>
<dbReference type="SUPFAM" id="SSF51395">
    <property type="entry name" value="FMN-linked oxidoreductases"/>
    <property type="match status" value="1"/>
</dbReference>
<accession>Q8Y6C8</accession>
<evidence type="ECO:0000255" key="1">
    <source>
        <dbReference type="HAMAP-Rule" id="MF_00112"/>
    </source>
</evidence>
<evidence type="ECO:0000269" key="2">
    <source>
    </source>
</evidence>
<evidence type="ECO:0000269" key="3">
    <source>
    </source>
</evidence>
<reference key="1">
    <citation type="journal article" date="2001" name="Science">
        <title>Comparative genomics of Listeria species.</title>
        <authorList>
            <person name="Glaser P."/>
            <person name="Frangeul L."/>
            <person name="Buchrieser C."/>
            <person name="Rusniok C."/>
            <person name="Amend A."/>
            <person name="Baquero F."/>
            <person name="Berche P."/>
            <person name="Bloecker H."/>
            <person name="Brandt P."/>
            <person name="Chakraborty T."/>
            <person name="Charbit A."/>
            <person name="Chetouani F."/>
            <person name="Couve E."/>
            <person name="de Daruvar A."/>
            <person name="Dehoux P."/>
            <person name="Domann E."/>
            <person name="Dominguez-Bernal G."/>
            <person name="Duchaud E."/>
            <person name="Durant L."/>
            <person name="Dussurget O."/>
            <person name="Entian K.-D."/>
            <person name="Fsihi H."/>
            <person name="Garcia-del Portillo F."/>
            <person name="Garrido P."/>
            <person name="Gautier L."/>
            <person name="Goebel W."/>
            <person name="Gomez-Lopez N."/>
            <person name="Hain T."/>
            <person name="Hauf J."/>
            <person name="Jackson D."/>
            <person name="Jones L.-M."/>
            <person name="Kaerst U."/>
            <person name="Kreft J."/>
            <person name="Kuhn M."/>
            <person name="Kunst F."/>
            <person name="Kurapkat G."/>
            <person name="Madueno E."/>
            <person name="Maitournam A."/>
            <person name="Mata Vicente J."/>
            <person name="Ng E."/>
            <person name="Nedjari H."/>
            <person name="Nordsiek G."/>
            <person name="Novella S."/>
            <person name="de Pablos B."/>
            <person name="Perez-Diaz J.-C."/>
            <person name="Purcell R."/>
            <person name="Remmel B."/>
            <person name="Rose M."/>
            <person name="Schlueter T."/>
            <person name="Simoes N."/>
            <person name="Tierrez A."/>
            <person name="Vazquez-Boland J.-A."/>
            <person name="Voss H."/>
            <person name="Wehland J."/>
            <person name="Cossart P."/>
        </authorList>
    </citation>
    <scope>NUCLEOTIDE SEQUENCE [LARGE SCALE GENOMIC DNA]</scope>
    <source>
        <strain>ATCC BAA-679 / EGD-e</strain>
    </source>
</reference>
<reference key="2">
    <citation type="journal article" date="2011" name="Angew. Chem. Int. Ed. Engl.">
        <title>Functional assignment of an enzyme that catalyzes the synthesis of an archaea-type ether lipid in bacteria.</title>
        <authorList>
            <person name="Guldan H."/>
            <person name="Matysik F.M."/>
            <person name="Bocola M."/>
            <person name="Sterner R."/>
            <person name="Babinger P."/>
        </authorList>
    </citation>
    <scope>FUNCTION</scope>
    <scope>CATALYTIC ACTIVITY</scope>
    <scope>SUBSTRATE SPECIFICITY</scope>
    <scope>SUBUNIT</scope>
</reference>
<reference key="3">
    <citation type="journal article" date="2014" name="Mol. Microbiol.">
        <title>A comprehensive analysis of the geranylgeranylglyceryl phosphate synthase enzyme family identifies novel members and reveals mechanisms of substrate specificity and quaternary structure organization.</title>
        <authorList>
            <person name="Peterhoff D."/>
            <person name="Beer B."/>
            <person name="Rajendran C."/>
            <person name="Kumpula E.P."/>
            <person name="Kapetaniou E."/>
            <person name="Guldan H."/>
            <person name="Wierenga R.K."/>
            <person name="Sterner R."/>
            <person name="Babinger P."/>
        </authorList>
    </citation>
    <scope>FUNCTION</scope>
    <scope>CATALYTIC ACTIVITY</scope>
    <scope>SUBUNIT</scope>
</reference>